<sequence length="190" mass="20353">MRGLRPALSTFLFLLLITGGVYPLLTTALGQWWFPWQANGSLIREGDTVRGSALIGQNFTGNGYFHGRPSATAEMPYNPQASGGSNLAVSNPELDKQIAARVAALRAANPDASTSVPVELVTASASGLDNNITPQAAAWQIPRVAKARNLSVEQLTQLIAKYSQQPLVKYIGQPVVNIVELNLALDKLDE</sequence>
<reference key="1">
    <citation type="journal article" date="2009" name="PLoS Genet.">
        <title>Organised genome dynamics in the Escherichia coli species results in highly diverse adaptive paths.</title>
        <authorList>
            <person name="Touchon M."/>
            <person name="Hoede C."/>
            <person name="Tenaillon O."/>
            <person name="Barbe V."/>
            <person name="Baeriswyl S."/>
            <person name="Bidet P."/>
            <person name="Bingen E."/>
            <person name="Bonacorsi S."/>
            <person name="Bouchier C."/>
            <person name="Bouvet O."/>
            <person name="Calteau A."/>
            <person name="Chiapello H."/>
            <person name="Clermont O."/>
            <person name="Cruveiller S."/>
            <person name="Danchin A."/>
            <person name="Diard M."/>
            <person name="Dossat C."/>
            <person name="Karoui M.E."/>
            <person name="Frapy E."/>
            <person name="Garry L."/>
            <person name="Ghigo J.M."/>
            <person name="Gilles A.M."/>
            <person name="Johnson J."/>
            <person name="Le Bouguenec C."/>
            <person name="Lescat M."/>
            <person name="Mangenot S."/>
            <person name="Martinez-Jehanne V."/>
            <person name="Matic I."/>
            <person name="Nassif X."/>
            <person name="Oztas S."/>
            <person name="Petit M.A."/>
            <person name="Pichon C."/>
            <person name="Rouy Z."/>
            <person name="Ruf C.S."/>
            <person name="Schneider D."/>
            <person name="Tourret J."/>
            <person name="Vacherie B."/>
            <person name="Vallenet D."/>
            <person name="Medigue C."/>
            <person name="Rocha E.P.C."/>
            <person name="Denamur E."/>
        </authorList>
    </citation>
    <scope>NUCLEOTIDE SEQUENCE [LARGE SCALE GENOMIC DNA]</scope>
    <source>
        <strain>ATCC 35469 / DSM 13698 / BCRC 15582 / CCUG 18766 / IAM 14443 / JCM 21226 / LMG 7866 / NBRC 102419 / NCTC 12128 / CDC 0568-73</strain>
    </source>
</reference>
<feature type="chain" id="PRO_1000119357" description="Potassium-transporting ATPase KdpC subunit">
    <location>
        <begin position="1"/>
        <end position="190"/>
    </location>
</feature>
<feature type="transmembrane region" description="Helical" evidence="1">
    <location>
        <begin position="10"/>
        <end position="30"/>
    </location>
</feature>
<proteinExistence type="inferred from homology"/>
<gene>
    <name evidence="1" type="primary">kdpC</name>
    <name type="ordered locus">EFER_2414</name>
</gene>
<dbReference type="EMBL" id="CU928158">
    <property type="protein sequence ID" value="CAQ89913.1"/>
    <property type="molecule type" value="Genomic_DNA"/>
</dbReference>
<dbReference type="RefSeq" id="WP_015953583.1">
    <property type="nucleotide sequence ID" value="NC_011740.1"/>
</dbReference>
<dbReference type="SMR" id="B7LKR8"/>
<dbReference type="GeneID" id="75056553"/>
<dbReference type="KEGG" id="efe:EFER_2414"/>
<dbReference type="HOGENOM" id="CLU_077094_2_0_6"/>
<dbReference type="OrthoDB" id="9788285at2"/>
<dbReference type="Proteomes" id="UP000000745">
    <property type="component" value="Chromosome"/>
</dbReference>
<dbReference type="GO" id="GO:0005886">
    <property type="term" value="C:plasma membrane"/>
    <property type="evidence" value="ECO:0007669"/>
    <property type="project" value="UniProtKB-SubCell"/>
</dbReference>
<dbReference type="GO" id="GO:0005524">
    <property type="term" value="F:ATP binding"/>
    <property type="evidence" value="ECO:0007669"/>
    <property type="project" value="UniProtKB-UniRule"/>
</dbReference>
<dbReference type="GO" id="GO:0008556">
    <property type="term" value="F:P-type potassium transmembrane transporter activity"/>
    <property type="evidence" value="ECO:0007669"/>
    <property type="project" value="InterPro"/>
</dbReference>
<dbReference type="HAMAP" id="MF_00276">
    <property type="entry name" value="KdpC"/>
    <property type="match status" value="1"/>
</dbReference>
<dbReference type="InterPro" id="IPR003820">
    <property type="entry name" value="KdpC"/>
</dbReference>
<dbReference type="NCBIfam" id="TIGR00681">
    <property type="entry name" value="kdpC"/>
    <property type="match status" value="1"/>
</dbReference>
<dbReference type="NCBIfam" id="NF001454">
    <property type="entry name" value="PRK00315.1"/>
    <property type="match status" value="1"/>
</dbReference>
<dbReference type="PANTHER" id="PTHR30042">
    <property type="entry name" value="POTASSIUM-TRANSPORTING ATPASE C CHAIN"/>
    <property type="match status" value="1"/>
</dbReference>
<dbReference type="PANTHER" id="PTHR30042:SF2">
    <property type="entry name" value="POTASSIUM-TRANSPORTING ATPASE KDPC SUBUNIT"/>
    <property type="match status" value="1"/>
</dbReference>
<dbReference type="Pfam" id="PF02669">
    <property type="entry name" value="KdpC"/>
    <property type="match status" value="1"/>
</dbReference>
<dbReference type="PIRSF" id="PIRSF001296">
    <property type="entry name" value="K_ATPase_KdpC"/>
    <property type="match status" value="1"/>
</dbReference>
<organism>
    <name type="scientific">Escherichia fergusonii (strain ATCC 35469 / DSM 13698 / CCUG 18766 / IAM 14443 / JCM 21226 / LMG 7866 / NBRC 102419 / NCTC 12128 / CDC 0568-73)</name>
    <dbReference type="NCBI Taxonomy" id="585054"/>
    <lineage>
        <taxon>Bacteria</taxon>
        <taxon>Pseudomonadati</taxon>
        <taxon>Pseudomonadota</taxon>
        <taxon>Gammaproteobacteria</taxon>
        <taxon>Enterobacterales</taxon>
        <taxon>Enterobacteriaceae</taxon>
        <taxon>Escherichia</taxon>
    </lineage>
</organism>
<name>KDPC_ESCF3</name>
<keyword id="KW-0067">ATP-binding</keyword>
<keyword id="KW-0997">Cell inner membrane</keyword>
<keyword id="KW-1003">Cell membrane</keyword>
<keyword id="KW-0406">Ion transport</keyword>
<keyword id="KW-0472">Membrane</keyword>
<keyword id="KW-0547">Nucleotide-binding</keyword>
<keyword id="KW-0630">Potassium</keyword>
<keyword id="KW-0633">Potassium transport</keyword>
<keyword id="KW-0812">Transmembrane</keyword>
<keyword id="KW-1133">Transmembrane helix</keyword>
<keyword id="KW-0813">Transport</keyword>
<accession>B7LKR8</accession>
<comment type="function">
    <text evidence="1">Part of the high-affinity ATP-driven potassium transport (or Kdp) system, which catalyzes the hydrolysis of ATP coupled with the electrogenic transport of potassium into the cytoplasm. This subunit acts as a catalytic chaperone that increases the ATP-binding affinity of the ATP-hydrolyzing subunit KdpB by the formation of a transient KdpB/KdpC/ATP ternary complex.</text>
</comment>
<comment type="subunit">
    <text evidence="1">The system is composed of three essential subunits: KdpA, KdpB and KdpC.</text>
</comment>
<comment type="subcellular location">
    <subcellularLocation>
        <location evidence="1">Cell inner membrane</location>
        <topology evidence="1">Single-pass membrane protein</topology>
    </subcellularLocation>
</comment>
<comment type="similarity">
    <text evidence="1">Belongs to the KdpC family.</text>
</comment>
<evidence type="ECO:0000255" key="1">
    <source>
        <dbReference type="HAMAP-Rule" id="MF_00276"/>
    </source>
</evidence>
<protein>
    <recommendedName>
        <fullName evidence="1">Potassium-transporting ATPase KdpC subunit</fullName>
    </recommendedName>
    <alternativeName>
        <fullName evidence="1">ATP phosphohydrolase [potassium-transporting] C chain</fullName>
    </alternativeName>
    <alternativeName>
        <fullName evidence="1">Potassium-binding and translocating subunit C</fullName>
    </alternativeName>
    <alternativeName>
        <fullName evidence="1">Potassium-translocating ATPase C chain</fullName>
    </alternativeName>
</protein>